<name>PHR_ECOLI</name>
<comment type="function">
    <text>Involved in repair of UV radiation-induced DNA damage. Catalyzes the light-dependent monomerization (300-600 nm) of cyclobutyl pyrimidine dimers (in cis-syn configuration), which are formed between adjacent bases on the same DNA strand upon exposure to ultraviolet radiation.</text>
</comment>
<comment type="catalytic activity">
    <reaction>
        <text>cyclobutadipyrimidine (in DNA) = 2 pyrimidine residues (in DNA).</text>
        <dbReference type="EC" id="4.1.99.3"/>
    </reaction>
</comment>
<comment type="cofactor">
    <cofactor>
        <name>FAD</name>
        <dbReference type="ChEBI" id="CHEBI:57692"/>
    </cofactor>
    <text>Binds 1 FAD per subunit.</text>
</comment>
<comment type="cofactor">
    <cofactor evidence="4">
        <name>(6R)-5,10-methylene-5,6,7,8-tetrahydrofolate</name>
        <dbReference type="ChEBI" id="CHEBI:15636"/>
    </cofactor>
    <text evidence="4">Binds 1 5,10-methenyltetrahydrofolate (MTHF) non-covalently per subunit.</text>
</comment>
<comment type="biophysicochemical properties">
    <absorption>
        <max>384 nm</max>
    </absorption>
</comment>
<comment type="subunit">
    <text evidence="4">Monomer.</text>
</comment>
<comment type="interaction">
    <interactant intactId="EBI-555781">
        <id>P00914</id>
    </interactant>
    <interactant intactId="EBI-551698">
        <id>P68739</id>
        <label>nfi</label>
    </interactant>
    <organismsDiffer>false</organismsDiffer>
    <experiments>2</experiments>
</comment>
<comment type="miscellaneous">
    <text>There are only 10-20 molecules of photolyase per E.coli cell.</text>
</comment>
<comment type="miscellaneous">
    <text>Upon absorption of visible light electrons are transferred from Trp-307 through Trp-360 to Trp 383, and from there to FADH, giving rise to the fully reduced catalytic FADH(-).</text>
</comment>
<comment type="similarity">
    <text evidence="5">Belongs to the DNA photolyase class-1 family.</text>
</comment>
<proteinExistence type="evidence at protein level"/>
<feature type="chain" id="PRO_0000085108" description="Deoxyribodipyrimidine photo-lyase">
    <location>
        <begin position="1"/>
        <end position="472"/>
    </location>
</feature>
<feature type="domain" description="Photolyase/cryptochrome alpha/beta">
    <location>
        <begin position="2"/>
        <end position="134"/>
    </location>
</feature>
<feature type="region of interest" description="Interaction with DNA" evidence="1">
    <location>
        <begin position="275"/>
        <end position="282"/>
    </location>
</feature>
<feature type="region of interest" description="Interaction with DNA" evidence="1">
    <location>
        <begin position="342"/>
        <end position="343"/>
    </location>
</feature>
<feature type="binding site" evidence="4 6">
    <location>
        <position position="109"/>
    </location>
    <ligand>
        <name>(6R)-5,10-methylene-5,6,7,8-tetrahydrofolate</name>
        <dbReference type="ChEBI" id="CHEBI:15636"/>
    </ligand>
</feature>
<feature type="binding site" evidence="4 6">
    <location>
        <position position="110"/>
    </location>
    <ligand>
        <name>(6R)-5,10-methylene-5,6,7,8-tetrahydrofolate</name>
        <dbReference type="ChEBI" id="CHEBI:15636"/>
    </ligand>
</feature>
<feature type="binding site" evidence="4">
    <location>
        <position position="223"/>
    </location>
    <ligand>
        <name>FAD</name>
        <dbReference type="ChEBI" id="CHEBI:57692"/>
    </ligand>
</feature>
<feature type="binding site" evidence="1">
    <location>
        <position position="227"/>
    </location>
    <ligand>
        <name>DNA</name>
        <dbReference type="ChEBI" id="CHEBI:16991"/>
    </ligand>
</feature>
<feature type="binding site" evidence="4">
    <location>
        <begin position="235"/>
        <end position="239"/>
    </location>
    <ligand>
        <name>FAD</name>
        <dbReference type="ChEBI" id="CHEBI:57692"/>
    </ligand>
</feature>
<feature type="binding site" evidence="4">
    <location>
        <position position="272"/>
    </location>
    <ligand>
        <name>FAD</name>
        <dbReference type="ChEBI" id="CHEBI:57692"/>
    </ligand>
</feature>
<feature type="binding site" evidence="4">
    <location>
        <begin position="275"/>
        <end position="282"/>
    </location>
    <ligand>
        <name>FAD</name>
        <dbReference type="ChEBI" id="CHEBI:57692"/>
    </ligand>
</feature>
<feature type="binding site" evidence="4">
    <location>
        <begin position="373"/>
        <end position="375"/>
    </location>
    <ligand>
        <name>FAD</name>
        <dbReference type="ChEBI" id="CHEBI:57692"/>
    </ligand>
</feature>
<feature type="binding site" evidence="1">
    <location>
        <position position="405"/>
    </location>
    <ligand>
        <name>DNA</name>
        <dbReference type="ChEBI" id="CHEBI:16991"/>
    </ligand>
</feature>
<feature type="site" description="Electron transfer via tryptophanyl radical">
    <location>
        <position position="307"/>
    </location>
</feature>
<feature type="site" description="Electron transfer via tryptophanyl radical">
    <location>
        <position position="360"/>
    </location>
</feature>
<feature type="site" description="Electron transfer via tryptophanyl radical">
    <location>
        <position position="383"/>
    </location>
</feature>
<feature type="mutagenesis site" description="Reduces DNA-binding affinity." evidence="3">
    <original>W</original>
    <variation>X</variation>
    <location>
        <position position="278"/>
    </location>
</feature>
<feature type="mutagenesis site" description="Abolishes photolyase activity." evidence="2">
    <original>W</original>
    <variation>F</variation>
    <location>
        <position position="383"/>
    </location>
</feature>
<feature type="strand" evidence="7">
    <location>
        <begin position="3"/>
        <end position="7"/>
    </location>
</feature>
<feature type="helix" evidence="7">
    <location>
        <begin position="18"/>
        <end position="23"/>
    </location>
</feature>
<feature type="strand" evidence="7">
    <location>
        <begin position="24"/>
        <end position="26"/>
    </location>
</feature>
<feature type="strand" evidence="7">
    <location>
        <begin position="29"/>
        <end position="37"/>
    </location>
</feature>
<feature type="helix" evidence="7">
    <location>
        <begin position="39"/>
        <end position="44"/>
    </location>
</feature>
<feature type="helix" evidence="7">
    <location>
        <begin position="49"/>
        <end position="68"/>
    </location>
</feature>
<feature type="strand" evidence="7">
    <location>
        <begin position="73"/>
        <end position="77"/>
    </location>
</feature>
<feature type="helix" evidence="7">
    <location>
        <begin position="81"/>
        <end position="95"/>
    </location>
</feature>
<feature type="strand" evidence="7">
    <location>
        <begin position="99"/>
        <end position="103"/>
    </location>
</feature>
<feature type="helix" evidence="7">
    <location>
        <begin position="108"/>
        <end position="120"/>
    </location>
</feature>
<feature type="strand" evidence="7">
    <location>
        <begin position="124"/>
        <end position="129"/>
    </location>
</feature>
<feature type="strand" evidence="7">
    <location>
        <begin position="132"/>
        <end position="135"/>
    </location>
</feature>
<feature type="helix" evidence="7">
    <location>
        <begin position="151"/>
        <end position="163"/>
    </location>
</feature>
<feature type="turn" evidence="7">
    <location>
        <begin position="198"/>
        <end position="200"/>
    </location>
</feature>
<feature type="helix" evidence="7">
    <location>
        <begin position="205"/>
        <end position="217"/>
    </location>
</feature>
<feature type="helix" evidence="7">
    <location>
        <begin position="219"/>
        <end position="226"/>
    </location>
</feature>
<feature type="helix" evidence="7">
    <location>
        <begin position="239"/>
        <end position="244"/>
    </location>
</feature>
<feature type="helix" evidence="7">
    <location>
        <begin position="249"/>
        <end position="259"/>
    </location>
</feature>
<feature type="helix" evidence="7">
    <location>
        <begin position="261"/>
        <end position="265"/>
    </location>
</feature>
<feature type="helix" evidence="7">
    <location>
        <begin position="270"/>
        <end position="288"/>
    </location>
</feature>
<feature type="helix" evidence="7">
    <location>
        <begin position="290"/>
        <end position="294"/>
    </location>
</feature>
<feature type="helix" evidence="7">
    <location>
        <begin position="300"/>
        <end position="304"/>
    </location>
</feature>
<feature type="helix" evidence="7">
    <location>
        <begin position="311"/>
        <end position="319"/>
    </location>
</feature>
<feature type="helix" evidence="7">
    <location>
        <begin position="325"/>
        <end position="337"/>
    </location>
</feature>
<feature type="helix" evidence="7">
    <location>
        <begin position="342"/>
        <end position="354"/>
    </location>
</feature>
<feature type="helix" evidence="7">
    <location>
        <begin position="360"/>
        <end position="370"/>
    </location>
</feature>
<feature type="helix" evidence="7">
    <location>
        <begin position="376"/>
        <end position="386"/>
    </location>
</feature>
<feature type="helix" evidence="7">
    <location>
        <begin position="402"/>
        <end position="409"/>
    </location>
</feature>
<feature type="turn" evidence="7">
    <location>
        <begin position="410"/>
        <end position="412"/>
    </location>
</feature>
<feature type="helix" evidence="7">
    <location>
        <begin position="414"/>
        <end position="419"/>
    </location>
</feature>
<feature type="helix" evidence="7">
    <location>
        <begin position="421"/>
        <end position="423"/>
    </location>
</feature>
<feature type="helix" evidence="7">
    <location>
        <begin position="430"/>
        <end position="432"/>
    </location>
</feature>
<feature type="helix" evidence="7">
    <location>
        <begin position="434"/>
        <end position="439"/>
    </location>
</feature>
<feature type="turn" evidence="7">
    <location>
        <begin position="440"/>
        <end position="442"/>
    </location>
</feature>
<feature type="helix" evidence="7">
    <location>
        <begin position="454"/>
        <end position="468"/>
    </location>
</feature>
<keyword id="KW-0002">3D-structure</keyword>
<keyword id="KW-0157">Chromophore</keyword>
<keyword id="KW-0227">DNA damage</keyword>
<keyword id="KW-0234">DNA repair</keyword>
<keyword id="KW-0238">DNA-binding</keyword>
<keyword id="KW-0274">FAD</keyword>
<keyword id="KW-0285">Flavoprotein</keyword>
<keyword id="KW-0456">Lyase</keyword>
<keyword id="KW-0547">Nucleotide-binding</keyword>
<keyword id="KW-1185">Reference proteome</keyword>
<gene>
    <name type="primary">phrB</name>
    <name type="synonym">phr</name>
    <name type="ordered locus">b0708</name>
    <name type="ordered locus">JW0698</name>
</gene>
<evidence type="ECO:0000250" key="1"/>
<evidence type="ECO:0000269" key="2">
    <source>
    </source>
</evidence>
<evidence type="ECO:0000269" key="3">
    <source>
    </source>
</evidence>
<evidence type="ECO:0000269" key="4">
    <source>
    </source>
</evidence>
<evidence type="ECO:0000305" key="5"/>
<evidence type="ECO:0007744" key="6">
    <source>
        <dbReference type="PDB" id="1DNP"/>
    </source>
</evidence>
<evidence type="ECO:0007829" key="7">
    <source>
        <dbReference type="PDB" id="1DNP"/>
    </source>
</evidence>
<reference key="1">
    <citation type="journal article" date="1984" name="J. Biol. Chem.">
        <title>Sequences of the Escherichia coli photolyase gene and protein.</title>
        <authorList>
            <person name="Sancar G.B."/>
            <person name="Smith F.W."/>
            <person name="Lorence M.C."/>
            <person name="Rupert C.S."/>
            <person name="Sancar A."/>
        </authorList>
    </citation>
    <scope>NUCLEOTIDE SEQUENCE [GENOMIC DNA]</scope>
</reference>
<reference key="2">
    <citation type="submission" date="1991-01" db="EMBL/GenBank/DDBJ databases">
        <authorList>
            <person name="Begley T.P."/>
        </authorList>
    </citation>
    <scope>NUCLEOTIDE SEQUENCE [GENOMIC DNA]</scope>
    <source>
        <strain>K12 / W3110 / ATCC 27325 / DSM 5911</strain>
    </source>
</reference>
<reference key="3">
    <citation type="journal article" date="1996" name="DNA Res.">
        <title>A 718-kb DNA sequence of the Escherichia coli K-12 genome corresponding to the 12.7-28.0 min region on the linkage map.</title>
        <authorList>
            <person name="Oshima T."/>
            <person name="Aiba H."/>
            <person name="Baba T."/>
            <person name="Fujita K."/>
            <person name="Hayashi K."/>
            <person name="Honjo A."/>
            <person name="Ikemoto K."/>
            <person name="Inada T."/>
            <person name="Itoh T."/>
            <person name="Kajihara M."/>
            <person name="Kanai K."/>
            <person name="Kashimoto K."/>
            <person name="Kimura S."/>
            <person name="Kitagawa M."/>
            <person name="Makino K."/>
            <person name="Masuda S."/>
            <person name="Miki T."/>
            <person name="Mizobuchi K."/>
            <person name="Mori H."/>
            <person name="Motomura K."/>
            <person name="Nakamura Y."/>
            <person name="Nashimoto H."/>
            <person name="Nishio Y."/>
            <person name="Saito N."/>
            <person name="Sampei G."/>
            <person name="Seki Y."/>
            <person name="Tagami H."/>
            <person name="Takemoto K."/>
            <person name="Wada C."/>
            <person name="Yamamoto Y."/>
            <person name="Yano M."/>
            <person name="Horiuchi T."/>
        </authorList>
    </citation>
    <scope>NUCLEOTIDE SEQUENCE [LARGE SCALE GENOMIC DNA]</scope>
    <source>
        <strain>K12 / W3110 / ATCC 27325 / DSM 5911</strain>
    </source>
</reference>
<reference key="4">
    <citation type="journal article" date="1997" name="Science">
        <title>The complete genome sequence of Escherichia coli K-12.</title>
        <authorList>
            <person name="Blattner F.R."/>
            <person name="Plunkett G. III"/>
            <person name="Bloch C.A."/>
            <person name="Perna N.T."/>
            <person name="Burland V."/>
            <person name="Riley M."/>
            <person name="Collado-Vides J."/>
            <person name="Glasner J.D."/>
            <person name="Rode C.K."/>
            <person name="Mayhew G.F."/>
            <person name="Gregor J."/>
            <person name="Davis N.W."/>
            <person name="Kirkpatrick H.A."/>
            <person name="Goeden M.A."/>
            <person name="Rose D.J."/>
            <person name="Mau B."/>
            <person name="Shao Y."/>
        </authorList>
    </citation>
    <scope>NUCLEOTIDE SEQUENCE [LARGE SCALE GENOMIC DNA]</scope>
    <source>
        <strain>K12 / MG1655 / ATCC 47076</strain>
    </source>
</reference>
<reference key="5">
    <citation type="journal article" date="2006" name="Mol. Syst. Biol.">
        <title>Highly accurate genome sequences of Escherichia coli K-12 strains MG1655 and W3110.</title>
        <authorList>
            <person name="Hayashi K."/>
            <person name="Morooka N."/>
            <person name="Yamamoto Y."/>
            <person name="Fujita K."/>
            <person name="Isono K."/>
            <person name="Choi S."/>
            <person name="Ohtsubo E."/>
            <person name="Baba T."/>
            <person name="Wanner B.L."/>
            <person name="Mori H."/>
            <person name="Horiuchi T."/>
        </authorList>
    </citation>
    <scope>NUCLEOTIDE SEQUENCE [LARGE SCALE GENOMIC DNA]</scope>
    <source>
        <strain>K12 / W3110 / ATCC 27325 / DSM 5911</strain>
    </source>
</reference>
<reference key="6">
    <citation type="journal article" date="1987" name="Trends Biochem. Sci.">
        <title>Structure and function of DNA photolyases.</title>
        <authorList>
            <person name="Sancar G.B."/>
            <person name="Sancar A."/>
        </authorList>
    </citation>
    <scope>REVIEW</scope>
</reference>
<reference key="7">
    <citation type="journal article" date="1990" name="Biochemistry">
        <title>Active site of Escherichia coli DNA photolyase: mutations at Trp277 alter the selectivity of the enzyme without affecting the quantum yield of photorepair.</title>
        <authorList>
            <person name="Li Y.F."/>
            <person name="Sancar A."/>
        </authorList>
    </citation>
    <scope>MUTAGENESIS OF TRP-278</scope>
</reference>
<reference key="8">
    <citation type="journal article" date="2003" name="Proc. Natl. Acad. Sci. U.S.A.">
        <title>Dissection of the triple tryptophan electron transfer chain in Escherichia coli DNA photolyase: Trp382 is the primary donor in photoactivation.</title>
        <authorList>
            <person name="Byrdin M."/>
            <person name="Eker A.P."/>
            <person name="Vos M.H."/>
            <person name="Brettel K."/>
        </authorList>
    </citation>
    <scope>MUTAGENESIS OF TRP-383</scope>
    <scope>ELECTRON TRANSFER CHAIN</scope>
</reference>
<reference key="9">
    <citation type="journal article" date="2005" name="Biochim. Biophys. Acta">
        <title>Light-driven enzymatic catalysis of DNA repair: a review of recent biophysical studies on photolyase.</title>
        <authorList>
            <person name="Weber S."/>
        </authorList>
    </citation>
    <scope>REVIEW</scope>
</reference>
<reference key="10">
    <citation type="journal article" date="1995" name="Science">
        <title>Crystal structure of DNA photolyase from Escherichia coli.</title>
        <authorList>
            <person name="Park H.-W."/>
            <person name="Kim S.-T."/>
            <person name="Sancar A."/>
            <person name="Deisenhofer J."/>
        </authorList>
    </citation>
    <scope>X-RAY CRYSTALLOGRAPHY (2.3 ANGSTROMS) IN COMPLEX WITH FAD AND MTHF</scope>
    <scope>COFACTOR</scope>
    <scope>SUBUNIT</scope>
</reference>
<organism>
    <name type="scientific">Escherichia coli (strain K12)</name>
    <dbReference type="NCBI Taxonomy" id="83333"/>
    <lineage>
        <taxon>Bacteria</taxon>
        <taxon>Pseudomonadati</taxon>
        <taxon>Pseudomonadota</taxon>
        <taxon>Gammaproteobacteria</taxon>
        <taxon>Enterobacterales</taxon>
        <taxon>Enterobacteriaceae</taxon>
        <taxon>Escherichia</taxon>
    </lineage>
</organism>
<dbReference type="EC" id="4.1.99.3"/>
<dbReference type="EMBL" id="K01299">
    <property type="protein sequence ID" value="AAA24388.1"/>
    <property type="molecule type" value="Genomic_DNA"/>
</dbReference>
<dbReference type="EMBL" id="X57399">
    <property type="protein sequence ID" value="CAB56782.1"/>
    <property type="molecule type" value="Genomic_DNA"/>
</dbReference>
<dbReference type="EMBL" id="U00096">
    <property type="protein sequence ID" value="AAC73802.1"/>
    <property type="molecule type" value="Genomic_DNA"/>
</dbReference>
<dbReference type="EMBL" id="AP009048">
    <property type="protein sequence ID" value="BAA35367.1"/>
    <property type="molecule type" value="Genomic_DNA"/>
</dbReference>
<dbReference type="PIR" id="A01137">
    <property type="entry name" value="WZECD"/>
</dbReference>
<dbReference type="RefSeq" id="NP_415236.1">
    <property type="nucleotide sequence ID" value="NC_000913.3"/>
</dbReference>
<dbReference type="RefSeq" id="WP_000207142.1">
    <property type="nucleotide sequence ID" value="NZ_SSZK01000033.1"/>
</dbReference>
<dbReference type="PDB" id="1DNP">
    <property type="method" value="X-ray"/>
    <property type="resolution" value="2.30 A"/>
    <property type="chains" value="A/B=2-472"/>
</dbReference>
<dbReference type="PDBsum" id="1DNP"/>
<dbReference type="SMR" id="P00914"/>
<dbReference type="BioGRID" id="4259920">
    <property type="interactions" value="175"/>
</dbReference>
<dbReference type="BioGRID" id="851344">
    <property type="interactions" value="1"/>
</dbReference>
<dbReference type="DIP" id="DIP-10505N"/>
<dbReference type="FunCoup" id="P00914">
    <property type="interactions" value="492"/>
</dbReference>
<dbReference type="IntAct" id="P00914">
    <property type="interactions" value="12"/>
</dbReference>
<dbReference type="STRING" id="511145.b0708"/>
<dbReference type="DrugBank" id="DB03147">
    <property type="generic name" value="Flavin adenine dinucleotide"/>
</dbReference>
<dbReference type="jPOST" id="P00914"/>
<dbReference type="PaxDb" id="511145-b0708"/>
<dbReference type="EnsemblBacteria" id="AAC73802">
    <property type="protein sequence ID" value="AAC73802"/>
    <property type="gene ID" value="b0708"/>
</dbReference>
<dbReference type="GeneID" id="947005"/>
<dbReference type="KEGG" id="ecj:JW0698"/>
<dbReference type="KEGG" id="eco:b0708"/>
<dbReference type="KEGG" id="ecoc:C3026_03540"/>
<dbReference type="PATRIC" id="fig|1411691.4.peg.1565"/>
<dbReference type="EchoBASE" id="EB0729"/>
<dbReference type="eggNOG" id="COG0415">
    <property type="taxonomic scope" value="Bacteria"/>
</dbReference>
<dbReference type="HOGENOM" id="CLU_010348_2_2_6"/>
<dbReference type="InParanoid" id="P00914"/>
<dbReference type="OMA" id="YTVFTPY"/>
<dbReference type="OrthoDB" id="9772484at2"/>
<dbReference type="PhylomeDB" id="P00914"/>
<dbReference type="BioCyc" id="EcoCyc:EG10736-MONOMER"/>
<dbReference type="BioCyc" id="MetaCyc:EG10736-MONOMER"/>
<dbReference type="BRENDA" id="4.1.99.3">
    <property type="organism ID" value="2026"/>
</dbReference>
<dbReference type="SABIO-RK" id="P00914"/>
<dbReference type="EvolutionaryTrace" id="P00914"/>
<dbReference type="PRO" id="PR:P00914"/>
<dbReference type="Proteomes" id="UP000000625">
    <property type="component" value="Chromosome"/>
</dbReference>
<dbReference type="GO" id="GO:0003684">
    <property type="term" value="F:damaged DNA binding"/>
    <property type="evidence" value="ECO:0000314"/>
    <property type="project" value="EcoCyc"/>
</dbReference>
<dbReference type="GO" id="GO:0003904">
    <property type="term" value="F:deoxyribodipyrimidine photo-lyase activity"/>
    <property type="evidence" value="ECO:0000314"/>
    <property type="project" value="EcoCyc"/>
</dbReference>
<dbReference type="GO" id="GO:0003677">
    <property type="term" value="F:DNA binding"/>
    <property type="evidence" value="ECO:0000318"/>
    <property type="project" value="GO_Central"/>
</dbReference>
<dbReference type="GO" id="GO:0071949">
    <property type="term" value="F:FAD binding"/>
    <property type="evidence" value="ECO:0000318"/>
    <property type="project" value="GO_Central"/>
</dbReference>
<dbReference type="GO" id="GO:0000719">
    <property type="term" value="P:photoreactive repair"/>
    <property type="evidence" value="ECO:0000314"/>
    <property type="project" value="EcoCyc"/>
</dbReference>
<dbReference type="GO" id="GO:0007603">
    <property type="term" value="P:phototransduction, visible light"/>
    <property type="evidence" value="ECO:0000314"/>
    <property type="project" value="EcoCyc"/>
</dbReference>
<dbReference type="GO" id="GO:0009416">
    <property type="term" value="P:response to light stimulus"/>
    <property type="evidence" value="ECO:0000318"/>
    <property type="project" value="GO_Central"/>
</dbReference>
<dbReference type="FunFam" id="1.10.579.10:FF:000003">
    <property type="entry name" value="Deoxyribodipyrimidine photo-lyase"/>
    <property type="match status" value="1"/>
</dbReference>
<dbReference type="Gene3D" id="1.25.40.80">
    <property type="match status" value="1"/>
</dbReference>
<dbReference type="Gene3D" id="1.10.579.10">
    <property type="entry name" value="DNA Cyclobutane Dipyrimidine Photolyase, subunit A, domain 3"/>
    <property type="match status" value="1"/>
</dbReference>
<dbReference type="Gene3D" id="3.40.50.620">
    <property type="entry name" value="HUPs"/>
    <property type="match status" value="1"/>
</dbReference>
<dbReference type="InterPro" id="IPR036134">
    <property type="entry name" value="Crypto/Photolyase_FAD-like_sf"/>
</dbReference>
<dbReference type="InterPro" id="IPR036155">
    <property type="entry name" value="Crypto/Photolyase_N_sf"/>
</dbReference>
<dbReference type="InterPro" id="IPR005101">
    <property type="entry name" value="Cryptochr/Photolyase_FAD-bd"/>
</dbReference>
<dbReference type="InterPro" id="IPR002081">
    <property type="entry name" value="Cryptochrome/DNA_photolyase_1"/>
</dbReference>
<dbReference type="InterPro" id="IPR018394">
    <property type="entry name" value="DNA_photolyase_1_CS_C"/>
</dbReference>
<dbReference type="InterPro" id="IPR006050">
    <property type="entry name" value="DNA_photolyase_N"/>
</dbReference>
<dbReference type="InterPro" id="IPR014729">
    <property type="entry name" value="Rossmann-like_a/b/a_fold"/>
</dbReference>
<dbReference type="NCBIfam" id="NF007955">
    <property type="entry name" value="PRK10674.1"/>
    <property type="match status" value="1"/>
</dbReference>
<dbReference type="PANTHER" id="PTHR11455">
    <property type="entry name" value="CRYPTOCHROME"/>
    <property type="match status" value="1"/>
</dbReference>
<dbReference type="PANTHER" id="PTHR11455:SF9">
    <property type="entry name" value="CRYPTOCHROME CIRCADIAN CLOCK 5 ISOFORM X1"/>
    <property type="match status" value="1"/>
</dbReference>
<dbReference type="Pfam" id="PF00875">
    <property type="entry name" value="DNA_photolyase"/>
    <property type="match status" value="1"/>
</dbReference>
<dbReference type="Pfam" id="PF03441">
    <property type="entry name" value="FAD_binding_7"/>
    <property type="match status" value="1"/>
</dbReference>
<dbReference type="PRINTS" id="PR00147">
    <property type="entry name" value="DNAPHOTLYASE"/>
</dbReference>
<dbReference type="SUPFAM" id="SSF48173">
    <property type="entry name" value="Cryptochrome/photolyase FAD-binding domain"/>
    <property type="match status" value="1"/>
</dbReference>
<dbReference type="SUPFAM" id="SSF52425">
    <property type="entry name" value="Cryptochrome/photolyase, N-terminal domain"/>
    <property type="match status" value="1"/>
</dbReference>
<dbReference type="PROSITE" id="PS00394">
    <property type="entry name" value="DNA_PHOTOLYASES_1_1"/>
    <property type="match status" value="1"/>
</dbReference>
<dbReference type="PROSITE" id="PS00691">
    <property type="entry name" value="DNA_PHOTOLYASES_1_2"/>
    <property type="match status" value="1"/>
</dbReference>
<dbReference type="PROSITE" id="PS51645">
    <property type="entry name" value="PHR_CRY_ALPHA_BETA"/>
    <property type="match status" value="1"/>
</dbReference>
<accession>P00914</accession>
<protein>
    <recommendedName>
        <fullName>Deoxyribodipyrimidine photo-lyase</fullName>
        <ecNumber>4.1.99.3</ecNumber>
    </recommendedName>
    <alternativeName>
        <fullName>DNA photolyase</fullName>
    </alternativeName>
    <alternativeName>
        <fullName>Photoreactivating enzyme</fullName>
    </alternativeName>
</protein>
<sequence length="472" mass="53667">MTTHLVWFRQDLRLHDNLALAAACRNSSARVLALYIATPRQWATHNMSPRQAELINAQLNGLQIALAEKGIPLLFREVDDFVASVEIVKQVCAENSVTHLFYNYQYEVNERARDVEVERALRNVVCEGFDDSVILPPGAVMTGNHEMYKVFTPFKNAWLKRLREGMPECVAAPKVRSSGSIEPSPSITLNYPRQSFDTAHFPVEEKAAIAQLRQFCQNGAGEYEQQRDFPAVEGTSRLSASLATGGLSPRQCLHRLLAEQPQALDGGAGSVWLNELIWREFYRHLITYHPSLCKHRPFIAWTDRVQWQSNPAHLQAWQEGKTGYPIVDAAMRQLNSTGWMHNRLRMITASFLVKDLLIDWREGERYFMSQLIDGDLAANNGGWQWAASTGTDAAPYFRIFNPTTQGEKFDHEGEFIRQWLPELRDVPGKVVHEPWKWAQKAGVTLDYPQPIVEHKEARVQTLAAYEAARKGK</sequence>